<feature type="chain" id="PRO_0000454620" description="Reductase FVEG_12641">
    <location>
        <begin position="1"/>
        <end position="561"/>
    </location>
</feature>
<feature type="domain" description="MOSC" evidence="3">
    <location>
        <begin position="52"/>
        <end position="189"/>
    </location>
</feature>
<feature type="domain" description="FAD-binding FR-type" evidence="4">
    <location>
        <begin position="237"/>
        <end position="342"/>
    </location>
</feature>
<feature type="domain" description="2Fe-2S ferredoxin-type" evidence="2">
    <location>
        <begin position="474"/>
        <end position="561"/>
    </location>
</feature>
<feature type="region of interest" description="Disordered" evidence="5">
    <location>
        <begin position="1"/>
        <end position="26"/>
    </location>
</feature>
<feature type="binding site" evidence="1">
    <location>
        <begin position="288"/>
        <end position="289"/>
    </location>
    <ligand>
        <name>FMN</name>
        <dbReference type="ChEBI" id="CHEBI:58210"/>
    </ligand>
</feature>
<feature type="binding site" evidence="1">
    <location>
        <begin position="305"/>
        <end position="307"/>
    </location>
    <ligand>
        <name>FMN</name>
        <dbReference type="ChEBI" id="CHEBI:58210"/>
    </ligand>
</feature>
<feature type="binding site" evidence="1">
    <location>
        <begin position="313"/>
        <end position="316"/>
    </location>
    <ligand>
        <name>FMN</name>
        <dbReference type="ChEBI" id="CHEBI:58210"/>
    </ligand>
</feature>
<feature type="binding site" evidence="1">
    <location>
        <position position="362"/>
    </location>
    <ligand>
        <name>FMN</name>
        <dbReference type="ChEBI" id="CHEBI:58210"/>
    </ligand>
</feature>
<feature type="binding site" evidence="2">
    <location>
        <position position="512"/>
    </location>
    <ligand>
        <name>[2Fe-2S] cluster</name>
        <dbReference type="ChEBI" id="CHEBI:190135"/>
    </ligand>
</feature>
<feature type="binding site" evidence="1">
    <location>
        <position position="514"/>
    </location>
    <ligand>
        <name>FMN</name>
        <dbReference type="ChEBI" id="CHEBI:58210"/>
    </ligand>
</feature>
<feature type="binding site" evidence="2">
    <location>
        <position position="517"/>
    </location>
    <ligand>
        <name>[2Fe-2S] cluster</name>
        <dbReference type="ChEBI" id="CHEBI:190135"/>
    </ligand>
</feature>
<feature type="binding site" evidence="2">
    <location>
        <position position="520"/>
    </location>
    <ligand>
        <name>[2Fe-2S] cluster</name>
        <dbReference type="ChEBI" id="CHEBI:190135"/>
    </ligand>
</feature>
<feature type="binding site" evidence="2">
    <location>
        <position position="548"/>
    </location>
    <ligand>
        <name>[2Fe-2S] cluster</name>
        <dbReference type="ChEBI" id="CHEBI:190135"/>
    </ligand>
</feature>
<dbReference type="EC" id="1.-.-.-" evidence="12"/>
<dbReference type="EMBL" id="CM000580">
    <property type="protein sequence ID" value="EWG54423.1"/>
    <property type="molecule type" value="Genomic_DNA"/>
</dbReference>
<dbReference type="RefSeq" id="XP_018760614.1">
    <property type="nucleotide sequence ID" value="XM_018901991.1"/>
</dbReference>
<dbReference type="SMR" id="W7MSJ7"/>
<dbReference type="EnsemblFungi" id="FVEG_12641T0">
    <property type="protein sequence ID" value="FVEG_12641T0"/>
    <property type="gene ID" value="FVEG_12641"/>
</dbReference>
<dbReference type="GeneID" id="30070069"/>
<dbReference type="KEGG" id="fvr:FVEG_12641"/>
<dbReference type="VEuPathDB" id="FungiDB:FVEG_12641"/>
<dbReference type="eggNOG" id="ENOG502SEJJ">
    <property type="taxonomic scope" value="Eukaryota"/>
</dbReference>
<dbReference type="HOGENOM" id="CLU_003827_17_2_1"/>
<dbReference type="OMA" id="WSVLNVQ"/>
<dbReference type="OrthoDB" id="71194at110618"/>
<dbReference type="Proteomes" id="UP000009096">
    <property type="component" value="Chromosome 3"/>
</dbReference>
<dbReference type="GO" id="GO:0051537">
    <property type="term" value="F:2 iron, 2 sulfur cluster binding"/>
    <property type="evidence" value="ECO:0007669"/>
    <property type="project" value="UniProtKB-KW"/>
</dbReference>
<dbReference type="GO" id="GO:0030151">
    <property type="term" value="F:molybdenum ion binding"/>
    <property type="evidence" value="ECO:0007669"/>
    <property type="project" value="InterPro"/>
</dbReference>
<dbReference type="GO" id="GO:0016491">
    <property type="term" value="F:oxidoreductase activity"/>
    <property type="evidence" value="ECO:0007669"/>
    <property type="project" value="UniProtKB-KW"/>
</dbReference>
<dbReference type="GO" id="GO:0030170">
    <property type="term" value="F:pyridoxal phosphate binding"/>
    <property type="evidence" value="ECO:0007669"/>
    <property type="project" value="InterPro"/>
</dbReference>
<dbReference type="CDD" id="cd00207">
    <property type="entry name" value="fer2"/>
    <property type="match status" value="1"/>
</dbReference>
<dbReference type="CDD" id="cd06185">
    <property type="entry name" value="PDR_like"/>
    <property type="match status" value="1"/>
</dbReference>
<dbReference type="Gene3D" id="3.10.20.30">
    <property type="match status" value="1"/>
</dbReference>
<dbReference type="Gene3D" id="3.40.50.80">
    <property type="entry name" value="Nucleotide-binding domain of ferredoxin-NADP reductase (FNR) module"/>
    <property type="match status" value="1"/>
</dbReference>
<dbReference type="Gene3D" id="2.40.33.20">
    <property type="entry name" value="PK beta-barrel domain-like"/>
    <property type="match status" value="1"/>
</dbReference>
<dbReference type="Gene3D" id="2.40.30.10">
    <property type="entry name" value="Translation factors"/>
    <property type="match status" value="1"/>
</dbReference>
<dbReference type="InterPro" id="IPR036010">
    <property type="entry name" value="2Fe-2S_ferredoxin-like_sf"/>
</dbReference>
<dbReference type="InterPro" id="IPR001041">
    <property type="entry name" value="2Fe-2S_ferredoxin-type"/>
</dbReference>
<dbReference type="InterPro" id="IPR006058">
    <property type="entry name" value="2Fe2S_fd_BS"/>
</dbReference>
<dbReference type="InterPro" id="IPR052353">
    <property type="entry name" value="Benzoxazolinone_Detox_Enz"/>
</dbReference>
<dbReference type="InterPro" id="IPR012675">
    <property type="entry name" value="Beta-grasp_dom_sf"/>
</dbReference>
<dbReference type="InterPro" id="IPR017927">
    <property type="entry name" value="FAD-bd_FR_type"/>
</dbReference>
<dbReference type="InterPro" id="IPR039261">
    <property type="entry name" value="FNR_nucleotide-bd"/>
</dbReference>
<dbReference type="InterPro" id="IPR005302">
    <property type="entry name" value="MoCF_Sase_C"/>
</dbReference>
<dbReference type="InterPro" id="IPR011037">
    <property type="entry name" value="Pyrv_Knase-like_insert_dom_sf"/>
</dbReference>
<dbReference type="InterPro" id="IPR017938">
    <property type="entry name" value="Riboflavin_synthase-like_b-brl"/>
</dbReference>
<dbReference type="PANTHER" id="PTHR30212">
    <property type="entry name" value="PROTEIN YIIM"/>
    <property type="match status" value="1"/>
</dbReference>
<dbReference type="PANTHER" id="PTHR30212:SF2">
    <property type="entry name" value="PROTEIN YIIM"/>
    <property type="match status" value="1"/>
</dbReference>
<dbReference type="Pfam" id="PF00111">
    <property type="entry name" value="Fer2"/>
    <property type="match status" value="1"/>
</dbReference>
<dbReference type="Pfam" id="PF03473">
    <property type="entry name" value="MOSC"/>
    <property type="match status" value="1"/>
</dbReference>
<dbReference type="PRINTS" id="PR00409">
    <property type="entry name" value="PHDIOXRDTASE"/>
</dbReference>
<dbReference type="SUPFAM" id="SSF54292">
    <property type="entry name" value="2Fe-2S ferredoxin-like"/>
    <property type="match status" value="1"/>
</dbReference>
<dbReference type="SUPFAM" id="SSF52343">
    <property type="entry name" value="Ferredoxin reductase-like, C-terminal NADP-linked domain"/>
    <property type="match status" value="1"/>
</dbReference>
<dbReference type="SUPFAM" id="SSF50800">
    <property type="entry name" value="PK beta-barrel domain-like"/>
    <property type="match status" value="1"/>
</dbReference>
<dbReference type="SUPFAM" id="SSF63380">
    <property type="entry name" value="Riboflavin synthase domain-like"/>
    <property type="match status" value="1"/>
</dbReference>
<dbReference type="PROSITE" id="PS00197">
    <property type="entry name" value="2FE2S_FER_1"/>
    <property type="match status" value="1"/>
</dbReference>
<dbReference type="PROSITE" id="PS51085">
    <property type="entry name" value="2FE2S_FER_2"/>
    <property type="match status" value="1"/>
</dbReference>
<dbReference type="PROSITE" id="PS51384">
    <property type="entry name" value="FAD_FR"/>
    <property type="match status" value="1"/>
</dbReference>
<dbReference type="PROSITE" id="PS51340">
    <property type="entry name" value="MOSC"/>
    <property type="match status" value="1"/>
</dbReference>
<sequence>MGVQSTANLPKETVSHLDTAPTPKPGVLLQVRAGRIKKGALGGEITSAIYKQQHDGPVFCSATGVLGDEHASSGHGGTERAVHQYNPDHYPDWRAENPPEPDLYDVGAYGENLVTTNMSDENVCIGDIYKLGDDVLLEVSEPRHPCFKLNSRFKWPRALKRTIRTGRAGWNMRVLKTGNICKGDTISLLERPYPKWSVLNVQRVIRARNVSLNLLAECTQLPMTDLFLDIAKERLRSAPKTYTLVDAHLVAQRVRKLTFALKEPLTIVNPAFDPYAFAQVTFGRETKFERSYSIVDGDIYKFSLGVSLDRQSRGGSAYLHNELKIGDQIEMSPGSNPGAMENDAKCDESLTRVLIVGGIGITAFLPSMRDWESKGLPYHLHYAIRSLEEAAFLDQLPKDKTTLYIRSEGQRLDISGAIPKPNHDGAYNARIFSCGPSGMMKECETVAKELGYPDHMLHFEDFGSGGGGDLGEPFEVEVDEPDSNRHETMTVPPNKTLLDVLNDAGFDVLYSCKSGACGACKVELCEGKVDYKSTALLGKEKGKALQACVDRGIGRLRIEID</sequence>
<reference key="1">
    <citation type="journal article" date="2010" name="Nature">
        <title>Comparative genomics reveals mobile pathogenicity chromosomes in Fusarium.</title>
        <authorList>
            <person name="Ma L.-J."/>
            <person name="van der Does H.C."/>
            <person name="Borkovich K.A."/>
            <person name="Coleman J.J."/>
            <person name="Daboussi M.-J."/>
            <person name="Di Pietro A."/>
            <person name="Dufresne M."/>
            <person name="Freitag M."/>
            <person name="Grabherr M."/>
            <person name="Henrissat B."/>
            <person name="Houterman P.M."/>
            <person name="Kang S."/>
            <person name="Shim W.-B."/>
            <person name="Woloshuk C."/>
            <person name="Xie X."/>
            <person name="Xu J.-R."/>
            <person name="Antoniw J."/>
            <person name="Baker S.E."/>
            <person name="Bluhm B.H."/>
            <person name="Breakspear A."/>
            <person name="Brown D.W."/>
            <person name="Butchko R.A.E."/>
            <person name="Chapman S."/>
            <person name="Coulson R."/>
            <person name="Coutinho P.M."/>
            <person name="Danchin E.G.J."/>
            <person name="Diener A."/>
            <person name="Gale L.R."/>
            <person name="Gardiner D.M."/>
            <person name="Goff S."/>
            <person name="Hammond-Kosack K.E."/>
            <person name="Hilburn K."/>
            <person name="Hua-Van A."/>
            <person name="Jonkers W."/>
            <person name="Kazan K."/>
            <person name="Kodira C.D."/>
            <person name="Koehrsen M."/>
            <person name="Kumar L."/>
            <person name="Lee Y.-H."/>
            <person name="Li L."/>
            <person name="Manners J.M."/>
            <person name="Miranda-Saavedra D."/>
            <person name="Mukherjee M."/>
            <person name="Park G."/>
            <person name="Park J."/>
            <person name="Park S.-Y."/>
            <person name="Proctor R.H."/>
            <person name="Regev A."/>
            <person name="Ruiz-Roldan M.C."/>
            <person name="Sain D."/>
            <person name="Sakthikumar S."/>
            <person name="Sykes S."/>
            <person name="Schwartz D.C."/>
            <person name="Turgeon B.G."/>
            <person name="Wapinski I."/>
            <person name="Yoder O."/>
            <person name="Young S."/>
            <person name="Zeng Q."/>
            <person name="Zhou S."/>
            <person name="Galagan J."/>
            <person name="Cuomo C.A."/>
            <person name="Kistler H.C."/>
            <person name="Rep M."/>
        </authorList>
    </citation>
    <scope>NUCLEOTIDE SEQUENCE [LARGE SCALE GENOMIC DNA]</scope>
    <source>
        <strain>M3125 / FGSC 7600</strain>
    </source>
</reference>
<reference key="2">
    <citation type="journal article" date="2002" name="Mol. Plant Microbe Interact.">
        <title>Fdb1 and Fdb2, Fusarium verticillioides loci necessary for detoxification of preformed antimicrobials from corn.</title>
        <authorList>
            <person name="Glenn A.E."/>
            <person name="Gold S.E."/>
            <person name="Bacon C.W."/>
        </authorList>
    </citation>
    <scope>FUNCTION</scope>
</reference>
<reference key="3">
    <citation type="journal article" date="2003" name="Appl. Environ. Microbiol.">
        <title>Identification of intermediate and branch metabolites resulting from biotransformation of 2-benzoxazolinone by Fusarium verticillioides.</title>
        <authorList>
            <person name="Glenn A.E."/>
            <person name="Meredith F.I."/>
            <person name="Morrison W.H. III"/>
            <person name="Bacon C.W."/>
        </authorList>
    </citation>
    <scope>FUNCTION</scope>
</reference>
<reference key="4">
    <citation type="journal article" date="2009" name="J. Appl. Microbiol.">
        <title>FDB2 encodes a member of the arylamine N-acetyltransferase family and is necessary for biotransformation of benzoxazolinones by Fusarium verticillioides.</title>
        <authorList>
            <person name="Glenn A.E."/>
            <person name="Bacon C.W."/>
        </authorList>
    </citation>
    <scope>FUNCTION</scope>
</reference>
<reference key="5">
    <citation type="journal article" date="2016" name="PLoS ONE">
        <title>Two horizontally transferred xenobiotic resistance gene clusters associated with detoxification of benzoxazolinones by Fusarium species.</title>
        <authorList>
            <person name="Glenn A.E."/>
            <person name="Davis C.B."/>
            <person name="Gao M."/>
            <person name="Gold S.E."/>
            <person name="Mitchell T.R."/>
            <person name="Proctor R.H."/>
            <person name="Stewart J.E."/>
            <person name="Snook M.E."/>
        </authorList>
    </citation>
    <scope>FUNCTION</scope>
    <scope>INDUCTION</scope>
</reference>
<keyword id="KW-0001">2Fe-2S</keyword>
<keyword id="KW-0285">Flavoprotein</keyword>
<keyword id="KW-0288">FMN</keyword>
<keyword id="KW-0408">Iron</keyword>
<keyword id="KW-0411">Iron-sulfur</keyword>
<keyword id="KW-0479">Metal-binding</keyword>
<keyword id="KW-0560">Oxidoreductase</keyword>
<keyword id="KW-1185">Reference proteome</keyword>
<proteinExistence type="evidence at transcript level"/>
<name>FDB41_GIBM7</name>
<comment type="function">
    <text evidence="6 7 8 9 13">Reductase; part of the Fusarium detoxification of benzoxazolinone cluster 2 (FDB2) involved in the degradation of benzoxazolinones produced by the host plant (PubMed:19302487, PubMed:26808652). Maize, wheat, and rye produce the 2 benzoxazinone phytoanticipins 2,4-dihy-droxy-7-methoxy-1,4-benzoxazin-3-one (DIMBOA) and 2,4-dihydroxy-1,4-benzoxazin-3-one (DIBOA) that, due to their inherent instability once released, spontaneously degrade to the more stable corresponding benzoxazolinones, 6-methoxy-2-benzoxazolinone (MBOA) and 2-benzoxazolinone (BOA), respectively (PubMed:11876429). The first step in the detoxification of benzoxazolinones involves the hydrolysis of the cyclic ester bond of benzoxazolinones by the FDB1 cluster gamma-lactamase MBL1 to aminophenols (PubMed:12788712, PubMed:26808652). MBL1 is able to convert BOA into 2-aminophenol (2-AP), as well as MBOA into 5-methoxy-2-aminophenol (2-AMP) (PubMed:12788712, PubMed:26808652). The FDB2 cluster N-malonyltransferase FDB2/NAT1 then metabolizes aminophenols via N-malonylation to non-toxic malonamic acids (PubMed:12788712, PubMed:19302487). FDB2/NAT1 converts 2-AP into N-(2-hydroxyphenyl) malonamic acid (HPMA) and 2-AMP into N-(2-hydroxy-4-methoxyphenyl) malonamic acid (HMPMA) (PubMed:12788712, PubMed:19302487). The duplicated dienlactone hydrolases DLH1 and DLH2 may provide redundant function for hydrolyzing the lactone moiety in the BOA molecule (Probable). The roles of the amidases an other enzymes encoded by the 2 FDB clusters have not been identified so far (Probable).</text>
</comment>
<comment type="cofactor">
    <cofactor evidence="1">
        <name>FMN</name>
        <dbReference type="ChEBI" id="CHEBI:58210"/>
    </cofactor>
</comment>
<comment type="subunit">
    <text evidence="1">Monomer.</text>
</comment>
<comment type="induction">
    <text evidence="9">Expression is induced in response to 2-benzoxasolinone (BOA) exposure.</text>
</comment>
<comment type="miscellaneous">
    <text evidence="13">Fusarium verticillioides possesses 2 unlinked loci, FDB1 and FDB2, necessary for detoxification of antimicrobial compounds produced by maize, including 2-benzoxazolinone (BOA) (Probable). The FDB2 cluster arose as a duplication of the FDB1 cluster with rearrangement and expansion by incorporating additional genes (Probable).</text>
</comment>
<comment type="similarity">
    <text evidence="11">Belongs to the PDR/VanB family.</text>
</comment>
<accession>W7MSJ7</accession>
<evidence type="ECO:0000250" key="1">
    <source>
        <dbReference type="UniProtKB" id="P33164"/>
    </source>
</evidence>
<evidence type="ECO:0000255" key="2">
    <source>
        <dbReference type="PROSITE-ProRule" id="PRU00465"/>
    </source>
</evidence>
<evidence type="ECO:0000255" key="3">
    <source>
        <dbReference type="PROSITE-ProRule" id="PRU00670"/>
    </source>
</evidence>
<evidence type="ECO:0000255" key="4">
    <source>
        <dbReference type="PROSITE-ProRule" id="PRU00716"/>
    </source>
</evidence>
<evidence type="ECO:0000256" key="5">
    <source>
        <dbReference type="SAM" id="MobiDB-lite"/>
    </source>
</evidence>
<evidence type="ECO:0000269" key="6">
    <source>
    </source>
</evidence>
<evidence type="ECO:0000269" key="7">
    <source>
    </source>
</evidence>
<evidence type="ECO:0000269" key="8">
    <source>
    </source>
</evidence>
<evidence type="ECO:0000269" key="9">
    <source>
    </source>
</evidence>
<evidence type="ECO:0000303" key="10">
    <source>
    </source>
</evidence>
<evidence type="ECO:0000305" key="11"/>
<evidence type="ECO:0000305" key="12">
    <source>
    </source>
</evidence>
<evidence type="ECO:0000305" key="13">
    <source>
    </source>
</evidence>
<gene>
    <name type="ORF">FVEG_12641</name>
</gene>
<organism>
    <name type="scientific">Gibberella moniliformis (strain M3125 / FGSC 7600)</name>
    <name type="common">Maize ear and stalk rot fungus</name>
    <name type="synonym">Fusarium verticillioides</name>
    <dbReference type="NCBI Taxonomy" id="334819"/>
    <lineage>
        <taxon>Eukaryota</taxon>
        <taxon>Fungi</taxon>
        <taxon>Dikarya</taxon>
        <taxon>Ascomycota</taxon>
        <taxon>Pezizomycotina</taxon>
        <taxon>Sordariomycetes</taxon>
        <taxon>Hypocreomycetidae</taxon>
        <taxon>Hypocreales</taxon>
        <taxon>Nectriaceae</taxon>
        <taxon>Fusarium</taxon>
        <taxon>Fusarium fujikuroi species complex</taxon>
    </lineage>
</organism>
<protein>
    <recommendedName>
        <fullName evidence="10">Reductase FVEG_12641</fullName>
        <ecNumber evidence="12">1.-.-.-</ecNumber>
    </recommendedName>
    <alternativeName>
        <fullName evidence="10">Fusarium detoxification of benzoxazolinone cluster 2 protein FVEG_12641</fullName>
        <shortName evidence="10">FDB2 cluster protein FVEG_12641</shortName>
    </alternativeName>
</protein>